<gene>
    <name type="primary">Pka-C3</name>
    <name type="synonym">DC2</name>
    <name type="ORF">CG6117</name>
</gene>
<sequence>MDLWHIFLERILVACRVSASVFANFGCGLYSSWKLICGDHDSASGLRAGLATPTQRGKATGDNGTTGTPARTIGKPQARIATAMSTATCARFCTPLSSGTAGSTSKLTTGNGSGNTMTSAYKIPSNNSTTANDSSNTETTFTFKLGRSNGRSSSNVASSESSDPLESDYSEEDPEQEQQRPDPATNSRSSSTATTTTTSSADHDNDVDEEDEEDDENEGEGNGRDADDATHDSSESIEEDDGNETDDEEDDDESEESSSVQTAKGVRKYHLDDYQIIKTVGTGTFGRVCLCRDRISEKYCAMKILAMTEVIRLKQIEHVKNERNILREIRHPFVISLEWSTKDDSNLYMIFDYVCGGELFTYLRNAGKFTSQTSNFYAAEIVSALEYLHSLQIVYRDLKPENLLINRDGHLKITDFGFAKKLRDRTWTLCGTPEYIAPEIIQSKGHNKAVDWWALGVLIYEMLVGYPPFYDEQPFGIYEKILSGKIEWERHMDPIAKDLIKKLLVNDRTKRLGNMKNGADDVKRHRWFKHLNWNDVYSKKLKPPILPDVHHDGDTKNFDDYPEKDWKPAKAVDQRDLQYFNDF</sequence>
<organism>
    <name type="scientific">Drosophila melanogaster</name>
    <name type="common">Fruit fly</name>
    <dbReference type="NCBI Taxonomy" id="7227"/>
    <lineage>
        <taxon>Eukaryota</taxon>
        <taxon>Metazoa</taxon>
        <taxon>Ecdysozoa</taxon>
        <taxon>Arthropoda</taxon>
        <taxon>Hexapoda</taxon>
        <taxon>Insecta</taxon>
        <taxon>Pterygota</taxon>
        <taxon>Neoptera</taxon>
        <taxon>Endopterygota</taxon>
        <taxon>Diptera</taxon>
        <taxon>Brachycera</taxon>
        <taxon>Muscomorpha</taxon>
        <taxon>Ephydroidea</taxon>
        <taxon>Drosophilidae</taxon>
        <taxon>Drosophila</taxon>
        <taxon>Sophophora</taxon>
    </lineage>
</organism>
<proteinExistence type="evidence at transcript level"/>
<reference key="1">
    <citation type="journal article" date="1988" name="Genes Dev.">
        <title>Isolation and characterization of Drosophila cAMP-dependent protein kinase genes.</title>
        <authorList>
            <person name="Kalderon D."/>
            <person name="Rubin G.M."/>
        </authorList>
    </citation>
    <scope>NUCLEOTIDE SEQUENCE [MRNA] (ISOFORM A)</scope>
    <source>
        <strain>Canton-S</strain>
    </source>
</reference>
<reference key="2">
    <citation type="journal article" date="2000" name="Science">
        <title>The genome sequence of Drosophila melanogaster.</title>
        <authorList>
            <person name="Adams M.D."/>
            <person name="Celniker S.E."/>
            <person name="Holt R.A."/>
            <person name="Evans C.A."/>
            <person name="Gocayne J.D."/>
            <person name="Amanatides P.G."/>
            <person name="Scherer S.E."/>
            <person name="Li P.W."/>
            <person name="Hoskins R.A."/>
            <person name="Galle R.F."/>
            <person name="George R.A."/>
            <person name="Lewis S.E."/>
            <person name="Richards S."/>
            <person name="Ashburner M."/>
            <person name="Henderson S.N."/>
            <person name="Sutton G.G."/>
            <person name="Wortman J.R."/>
            <person name="Yandell M.D."/>
            <person name="Zhang Q."/>
            <person name="Chen L.X."/>
            <person name="Brandon R.C."/>
            <person name="Rogers Y.-H.C."/>
            <person name="Blazej R.G."/>
            <person name="Champe M."/>
            <person name="Pfeiffer B.D."/>
            <person name="Wan K.H."/>
            <person name="Doyle C."/>
            <person name="Baxter E.G."/>
            <person name="Helt G."/>
            <person name="Nelson C.R."/>
            <person name="Miklos G.L.G."/>
            <person name="Abril J.F."/>
            <person name="Agbayani A."/>
            <person name="An H.-J."/>
            <person name="Andrews-Pfannkoch C."/>
            <person name="Baldwin D."/>
            <person name="Ballew R.M."/>
            <person name="Basu A."/>
            <person name="Baxendale J."/>
            <person name="Bayraktaroglu L."/>
            <person name="Beasley E.M."/>
            <person name="Beeson K.Y."/>
            <person name="Benos P.V."/>
            <person name="Berman B.P."/>
            <person name="Bhandari D."/>
            <person name="Bolshakov S."/>
            <person name="Borkova D."/>
            <person name="Botchan M.R."/>
            <person name="Bouck J."/>
            <person name="Brokstein P."/>
            <person name="Brottier P."/>
            <person name="Burtis K.C."/>
            <person name="Busam D.A."/>
            <person name="Butler H."/>
            <person name="Cadieu E."/>
            <person name="Center A."/>
            <person name="Chandra I."/>
            <person name="Cherry J.M."/>
            <person name="Cawley S."/>
            <person name="Dahlke C."/>
            <person name="Davenport L.B."/>
            <person name="Davies P."/>
            <person name="de Pablos B."/>
            <person name="Delcher A."/>
            <person name="Deng Z."/>
            <person name="Mays A.D."/>
            <person name="Dew I."/>
            <person name="Dietz S.M."/>
            <person name="Dodson K."/>
            <person name="Doup L.E."/>
            <person name="Downes M."/>
            <person name="Dugan-Rocha S."/>
            <person name="Dunkov B.C."/>
            <person name="Dunn P."/>
            <person name="Durbin K.J."/>
            <person name="Evangelista C.C."/>
            <person name="Ferraz C."/>
            <person name="Ferriera S."/>
            <person name="Fleischmann W."/>
            <person name="Fosler C."/>
            <person name="Gabrielian A.E."/>
            <person name="Garg N.S."/>
            <person name="Gelbart W.M."/>
            <person name="Glasser K."/>
            <person name="Glodek A."/>
            <person name="Gong F."/>
            <person name="Gorrell J.H."/>
            <person name="Gu Z."/>
            <person name="Guan P."/>
            <person name="Harris M."/>
            <person name="Harris N.L."/>
            <person name="Harvey D.A."/>
            <person name="Heiman T.J."/>
            <person name="Hernandez J.R."/>
            <person name="Houck J."/>
            <person name="Hostin D."/>
            <person name="Houston K.A."/>
            <person name="Howland T.J."/>
            <person name="Wei M.-H."/>
            <person name="Ibegwam C."/>
            <person name="Jalali M."/>
            <person name="Kalush F."/>
            <person name="Karpen G.H."/>
            <person name="Ke Z."/>
            <person name="Kennison J.A."/>
            <person name="Ketchum K.A."/>
            <person name="Kimmel B.E."/>
            <person name="Kodira C.D."/>
            <person name="Kraft C.L."/>
            <person name="Kravitz S."/>
            <person name="Kulp D."/>
            <person name="Lai Z."/>
            <person name="Lasko P."/>
            <person name="Lei Y."/>
            <person name="Levitsky A.A."/>
            <person name="Li J.H."/>
            <person name="Li Z."/>
            <person name="Liang Y."/>
            <person name="Lin X."/>
            <person name="Liu X."/>
            <person name="Mattei B."/>
            <person name="McIntosh T.C."/>
            <person name="McLeod M.P."/>
            <person name="McPherson D."/>
            <person name="Merkulov G."/>
            <person name="Milshina N.V."/>
            <person name="Mobarry C."/>
            <person name="Morris J."/>
            <person name="Moshrefi A."/>
            <person name="Mount S.M."/>
            <person name="Moy M."/>
            <person name="Murphy B."/>
            <person name="Murphy L."/>
            <person name="Muzny D.M."/>
            <person name="Nelson D.L."/>
            <person name="Nelson D.R."/>
            <person name="Nelson K.A."/>
            <person name="Nixon K."/>
            <person name="Nusskern D.R."/>
            <person name="Pacleb J.M."/>
            <person name="Palazzolo M."/>
            <person name="Pittman G.S."/>
            <person name="Pan S."/>
            <person name="Pollard J."/>
            <person name="Puri V."/>
            <person name="Reese M.G."/>
            <person name="Reinert K."/>
            <person name="Remington K."/>
            <person name="Saunders R.D.C."/>
            <person name="Scheeler F."/>
            <person name="Shen H."/>
            <person name="Shue B.C."/>
            <person name="Siden-Kiamos I."/>
            <person name="Simpson M."/>
            <person name="Skupski M.P."/>
            <person name="Smith T.J."/>
            <person name="Spier E."/>
            <person name="Spradling A.C."/>
            <person name="Stapleton M."/>
            <person name="Strong R."/>
            <person name="Sun E."/>
            <person name="Svirskas R."/>
            <person name="Tector C."/>
            <person name="Turner R."/>
            <person name="Venter E."/>
            <person name="Wang A.H."/>
            <person name="Wang X."/>
            <person name="Wang Z.-Y."/>
            <person name="Wassarman D.A."/>
            <person name="Weinstock G.M."/>
            <person name="Weissenbach J."/>
            <person name="Williams S.M."/>
            <person name="Woodage T."/>
            <person name="Worley K.C."/>
            <person name="Wu D."/>
            <person name="Yang S."/>
            <person name="Yao Q.A."/>
            <person name="Ye J."/>
            <person name="Yeh R.-F."/>
            <person name="Zaveri J.S."/>
            <person name="Zhan M."/>
            <person name="Zhang G."/>
            <person name="Zhao Q."/>
            <person name="Zheng L."/>
            <person name="Zheng X.H."/>
            <person name="Zhong F.N."/>
            <person name="Zhong W."/>
            <person name="Zhou X."/>
            <person name="Zhu S.C."/>
            <person name="Zhu X."/>
            <person name="Smith H.O."/>
            <person name="Gibbs R.A."/>
            <person name="Myers E.W."/>
            <person name="Rubin G.M."/>
            <person name="Venter J.C."/>
        </authorList>
    </citation>
    <scope>NUCLEOTIDE SEQUENCE [LARGE SCALE GENOMIC DNA]</scope>
    <source>
        <strain>Berkeley</strain>
    </source>
</reference>
<reference key="3">
    <citation type="journal article" date="2002" name="Genome Biol.">
        <title>Annotation of the Drosophila melanogaster euchromatic genome: a systematic review.</title>
        <authorList>
            <person name="Misra S."/>
            <person name="Crosby M.A."/>
            <person name="Mungall C.J."/>
            <person name="Matthews B.B."/>
            <person name="Campbell K.S."/>
            <person name="Hradecky P."/>
            <person name="Huang Y."/>
            <person name="Kaminker J.S."/>
            <person name="Millburn G.H."/>
            <person name="Prochnik S.E."/>
            <person name="Smith C.D."/>
            <person name="Tupy J.L."/>
            <person name="Whitfield E.J."/>
            <person name="Bayraktaroglu L."/>
            <person name="Berman B.P."/>
            <person name="Bettencourt B.R."/>
            <person name="Celniker S.E."/>
            <person name="de Grey A.D.N.J."/>
            <person name="Drysdale R.A."/>
            <person name="Harris N.L."/>
            <person name="Richter J."/>
            <person name="Russo S."/>
            <person name="Schroeder A.J."/>
            <person name="Shu S.Q."/>
            <person name="Stapleton M."/>
            <person name="Yamada C."/>
            <person name="Ashburner M."/>
            <person name="Gelbart W.M."/>
            <person name="Rubin G.M."/>
            <person name="Lewis S.E."/>
        </authorList>
    </citation>
    <scope>GENOME REANNOTATION</scope>
    <scope>ALTERNATIVE SPLICING</scope>
    <source>
        <strain>Berkeley</strain>
    </source>
</reference>
<reference key="4">
    <citation type="journal article" date="2002" name="Genome Biol.">
        <title>A Drosophila full-length cDNA resource.</title>
        <authorList>
            <person name="Stapleton M."/>
            <person name="Carlson J.W."/>
            <person name="Brokstein P."/>
            <person name="Yu C."/>
            <person name="Champe M."/>
            <person name="George R.A."/>
            <person name="Guarin H."/>
            <person name="Kronmiller B."/>
            <person name="Pacleb J.M."/>
            <person name="Park S."/>
            <person name="Wan K.H."/>
            <person name="Rubin G.M."/>
            <person name="Celniker S.E."/>
        </authorList>
    </citation>
    <scope>NUCLEOTIDE SEQUENCE [LARGE SCALE MRNA] (ISOFORM B)</scope>
    <source>
        <strain>Berkeley</strain>
        <tissue>Testis</tissue>
    </source>
</reference>
<reference key="5">
    <citation type="journal article" date="1995" name="Genetics">
        <title>Activity, expression and function of a second Drosophila protein kinase A catalytic subunit gene.</title>
        <authorList>
            <person name="Melendez A."/>
            <person name="Li W."/>
            <person name="Kalderon D."/>
        </authorList>
    </citation>
    <scope>FUNCTION</scope>
    <scope>TISSUE SPECIFICITY</scope>
</reference>
<evidence type="ECO:0000255" key="1">
    <source>
        <dbReference type="PROSITE-ProRule" id="PRU00159"/>
    </source>
</evidence>
<evidence type="ECO:0000255" key="2">
    <source>
        <dbReference type="PROSITE-ProRule" id="PRU00618"/>
    </source>
</evidence>
<evidence type="ECO:0000255" key="3">
    <source>
        <dbReference type="PROSITE-ProRule" id="PRU10027"/>
    </source>
</evidence>
<evidence type="ECO:0000256" key="4">
    <source>
        <dbReference type="SAM" id="MobiDB-lite"/>
    </source>
</evidence>
<evidence type="ECO:0000269" key="5">
    <source>
    </source>
</evidence>
<evidence type="ECO:0000303" key="6">
    <source>
    </source>
</evidence>
<evidence type="ECO:0000305" key="7"/>
<feature type="chain" id="PRO_0000086112" description="cAMP-dependent protein kinase catalytic subunit 3">
    <location>
        <begin position="1"/>
        <end position="583"/>
    </location>
</feature>
<feature type="domain" description="Protein kinase" evidence="1">
    <location>
        <begin position="274"/>
        <end position="528"/>
    </location>
</feature>
<feature type="domain" description="AGC-kinase C-terminal" evidence="2">
    <location>
        <begin position="529"/>
        <end position="583"/>
    </location>
</feature>
<feature type="region of interest" description="Disordered" evidence="4">
    <location>
        <begin position="51"/>
        <end position="75"/>
    </location>
</feature>
<feature type="region of interest" description="Disordered" evidence="4">
    <location>
        <begin position="98"/>
        <end position="264"/>
    </location>
</feature>
<feature type="compositionally biased region" description="Polar residues" evidence="4">
    <location>
        <begin position="52"/>
        <end position="69"/>
    </location>
</feature>
<feature type="compositionally biased region" description="Polar residues" evidence="4">
    <location>
        <begin position="98"/>
        <end position="107"/>
    </location>
</feature>
<feature type="compositionally biased region" description="Low complexity" evidence="4">
    <location>
        <begin position="108"/>
        <end position="162"/>
    </location>
</feature>
<feature type="compositionally biased region" description="Acidic residues" evidence="4">
    <location>
        <begin position="163"/>
        <end position="176"/>
    </location>
</feature>
<feature type="compositionally biased region" description="Low complexity" evidence="4">
    <location>
        <begin position="181"/>
        <end position="200"/>
    </location>
</feature>
<feature type="compositionally biased region" description="Acidic residues" evidence="4">
    <location>
        <begin position="205"/>
        <end position="219"/>
    </location>
</feature>
<feature type="compositionally biased region" description="Basic and acidic residues" evidence="4">
    <location>
        <begin position="221"/>
        <end position="234"/>
    </location>
</feature>
<feature type="compositionally biased region" description="Acidic residues" evidence="4">
    <location>
        <begin position="235"/>
        <end position="256"/>
    </location>
</feature>
<feature type="active site" description="Proton acceptor" evidence="1 3">
    <location>
        <position position="397"/>
    </location>
</feature>
<feature type="binding site" evidence="1">
    <location>
        <begin position="280"/>
        <end position="288"/>
    </location>
    <ligand>
        <name>ATP</name>
        <dbReference type="ChEBI" id="CHEBI:30616"/>
    </ligand>
</feature>
<feature type="binding site" evidence="1">
    <location>
        <position position="303"/>
    </location>
    <ligand>
        <name>ATP</name>
        <dbReference type="ChEBI" id="CHEBI:30616"/>
    </ligand>
</feature>
<feature type="splice variant" id="VSP_015105" description="In isoform A." evidence="6">
    <location>
        <begin position="1"/>
        <end position="83"/>
    </location>
</feature>
<feature type="sequence conflict" description="In Ref. 1 and 4." evidence="7" ref="1 4">
    <original>K</original>
    <variation>KKK</variation>
    <location>
        <position position="122"/>
    </location>
</feature>
<feature type="sequence conflict" description="In Ref. 1." evidence="7" ref="1">
    <original>N</original>
    <variation>K</variation>
    <location>
        <position position="186"/>
    </location>
</feature>
<feature type="sequence conflict" description="In Ref. 1 and 4." evidence="7" ref="1 4">
    <original>N</original>
    <variation>D</variation>
    <location>
        <position position="217"/>
    </location>
</feature>
<protein>
    <recommendedName>
        <fullName evidence="7">cAMP-dependent protein kinase catalytic subunit 3</fullName>
        <ecNumber>2.7.11.1</ecNumber>
    </recommendedName>
    <alternativeName>
        <fullName evidence="6">Protein kinase DC2</fullName>
    </alternativeName>
</protein>
<name>KAPC3_DROME</name>
<accession>P16912</accession>
<accession>Q86BP5</accession>
<accession>Q8MSN9</accession>
<accession>Q9VUV5</accession>
<keyword id="KW-0025">Alternative splicing</keyword>
<keyword id="KW-0067">ATP-binding</keyword>
<keyword id="KW-0418">Kinase</keyword>
<keyword id="KW-0547">Nucleotide-binding</keyword>
<keyword id="KW-1185">Reference proteome</keyword>
<keyword id="KW-0723">Serine/threonine-protein kinase</keyword>
<keyword id="KW-0808">Transferase</keyword>
<dbReference type="EC" id="2.7.11.1"/>
<dbReference type="EMBL" id="AE014296">
    <property type="protein sequence ID" value="AAF49568.2"/>
    <property type="molecule type" value="Genomic_DNA"/>
</dbReference>
<dbReference type="EMBL" id="AE014296">
    <property type="protein sequence ID" value="AAN11771.2"/>
    <property type="molecule type" value="Genomic_DNA"/>
</dbReference>
<dbReference type="EMBL" id="AY118681">
    <property type="protein sequence ID" value="AAM50541.1"/>
    <property type="molecule type" value="mRNA"/>
</dbReference>
<dbReference type="RefSeq" id="NP_524097.2">
    <molecule id="P16912-2"/>
    <property type="nucleotide sequence ID" value="NM_079373.4"/>
</dbReference>
<dbReference type="RefSeq" id="NP_730083.2">
    <molecule id="P16912-1"/>
    <property type="nucleotide sequence ID" value="NM_168638.3"/>
</dbReference>
<dbReference type="SMR" id="P16912"/>
<dbReference type="BioGRID" id="65045">
    <property type="interactions" value="6"/>
</dbReference>
<dbReference type="FunCoup" id="P16912">
    <property type="interactions" value="188"/>
</dbReference>
<dbReference type="IntAct" id="P16912">
    <property type="interactions" value="2"/>
</dbReference>
<dbReference type="STRING" id="7227.FBpp0075283"/>
<dbReference type="PaxDb" id="7227-FBpp0075283"/>
<dbReference type="EnsemblMetazoa" id="FBtr0075528">
    <molecule id="P16912-1"/>
    <property type="protein sequence ID" value="FBpp0075283"/>
    <property type="gene ID" value="FBgn0000489"/>
</dbReference>
<dbReference type="EnsemblMetazoa" id="FBtr0075529">
    <molecule id="P16912-2"/>
    <property type="protein sequence ID" value="FBpp0075284"/>
    <property type="gene ID" value="FBgn0000489"/>
</dbReference>
<dbReference type="GeneID" id="39733"/>
<dbReference type="KEGG" id="dme:Dmel_CG6117"/>
<dbReference type="AGR" id="FB:FBgn0000489"/>
<dbReference type="CTD" id="39733"/>
<dbReference type="FlyBase" id="FBgn0000489">
    <property type="gene designation" value="Pka-C3"/>
</dbReference>
<dbReference type="VEuPathDB" id="VectorBase:FBgn0000489"/>
<dbReference type="eggNOG" id="KOG0616">
    <property type="taxonomic scope" value="Eukaryota"/>
</dbReference>
<dbReference type="GeneTree" id="ENSGT00940000159832"/>
<dbReference type="InParanoid" id="P16912"/>
<dbReference type="OMA" id="GYLSDMW"/>
<dbReference type="OrthoDB" id="63267at2759"/>
<dbReference type="PhylomeDB" id="P16912"/>
<dbReference type="BRENDA" id="2.7.11.1">
    <property type="organism ID" value="1994"/>
</dbReference>
<dbReference type="SignaLink" id="P16912"/>
<dbReference type="BioGRID-ORCS" id="39733">
    <property type="hits" value="0 hits in 3 CRISPR screens"/>
</dbReference>
<dbReference type="ChiTaRS" id="Pka-C3">
    <property type="organism name" value="fly"/>
</dbReference>
<dbReference type="GenomeRNAi" id="39733"/>
<dbReference type="PRO" id="PR:P16912"/>
<dbReference type="Proteomes" id="UP000000803">
    <property type="component" value="Chromosome 3L"/>
</dbReference>
<dbReference type="Bgee" id="FBgn0000489">
    <property type="expression patterns" value="Expressed in muscle cell in digestive tract and 225 other cell types or tissues"/>
</dbReference>
<dbReference type="ExpressionAtlas" id="P16912">
    <property type="expression patterns" value="baseline and differential"/>
</dbReference>
<dbReference type="GO" id="GO:0005952">
    <property type="term" value="C:cAMP-dependent protein kinase complex"/>
    <property type="evidence" value="ECO:0000318"/>
    <property type="project" value="GO_Central"/>
</dbReference>
<dbReference type="GO" id="GO:0005829">
    <property type="term" value="C:cytosol"/>
    <property type="evidence" value="ECO:0000318"/>
    <property type="project" value="GO_Central"/>
</dbReference>
<dbReference type="GO" id="GO:0005524">
    <property type="term" value="F:ATP binding"/>
    <property type="evidence" value="ECO:0007669"/>
    <property type="project" value="UniProtKB-KW"/>
</dbReference>
<dbReference type="GO" id="GO:0004691">
    <property type="term" value="F:cAMP-dependent protein kinase activity"/>
    <property type="evidence" value="ECO:0000314"/>
    <property type="project" value="FlyBase"/>
</dbReference>
<dbReference type="GO" id="GO:0106310">
    <property type="term" value="F:protein serine kinase activity"/>
    <property type="evidence" value="ECO:0007669"/>
    <property type="project" value="RHEA"/>
</dbReference>
<dbReference type="GO" id="GO:0007155">
    <property type="term" value="P:cell adhesion"/>
    <property type="evidence" value="ECO:0000318"/>
    <property type="project" value="GO_Central"/>
</dbReference>
<dbReference type="GO" id="GO:0007476">
    <property type="term" value="P:imaginal disc-derived wing morphogenesis"/>
    <property type="evidence" value="ECO:0000315"/>
    <property type="project" value="FlyBase"/>
</dbReference>
<dbReference type="GO" id="GO:0007165">
    <property type="term" value="P:signal transduction"/>
    <property type="evidence" value="ECO:0000318"/>
    <property type="project" value="GO_Central"/>
</dbReference>
<dbReference type="CDD" id="cd05612">
    <property type="entry name" value="STKc_PRKX_like"/>
    <property type="match status" value="1"/>
</dbReference>
<dbReference type="FunFam" id="3.30.200.20:FF:000042">
    <property type="entry name" value="Aurora kinase A"/>
    <property type="match status" value="1"/>
</dbReference>
<dbReference type="FunFam" id="1.10.510.10:FF:000005">
    <property type="entry name" value="cAMP-dependent protein kinase catalytic subunit alpha"/>
    <property type="match status" value="1"/>
</dbReference>
<dbReference type="Gene3D" id="3.30.200.20">
    <property type="entry name" value="Phosphorylase Kinase, domain 1"/>
    <property type="match status" value="1"/>
</dbReference>
<dbReference type="Gene3D" id="1.10.510.10">
    <property type="entry name" value="Transferase(Phosphotransferase) domain 1"/>
    <property type="match status" value="1"/>
</dbReference>
<dbReference type="InterPro" id="IPR000961">
    <property type="entry name" value="AGC-kinase_C"/>
</dbReference>
<dbReference type="InterPro" id="IPR011009">
    <property type="entry name" value="Kinase-like_dom_sf"/>
</dbReference>
<dbReference type="InterPro" id="IPR000719">
    <property type="entry name" value="Prot_kinase_dom"/>
</dbReference>
<dbReference type="InterPro" id="IPR017441">
    <property type="entry name" value="Protein_kinase_ATP_BS"/>
</dbReference>
<dbReference type="InterPro" id="IPR008271">
    <property type="entry name" value="Ser/Thr_kinase_AS"/>
</dbReference>
<dbReference type="PANTHER" id="PTHR24353:SF37">
    <property type="entry name" value="CAMP-DEPENDENT PROTEIN KINASE CATALYTIC SUBUNIT PRKX"/>
    <property type="match status" value="1"/>
</dbReference>
<dbReference type="PANTHER" id="PTHR24353">
    <property type="entry name" value="CYCLIC NUCLEOTIDE-DEPENDENT PROTEIN KINASE"/>
    <property type="match status" value="1"/>
</dbReference>
<dbReference type="Pfam" id="PF00069">
    <property type="entry name" value="Pkinase"/>
    <property type="match status" value="1"/>
</dbReference>
<dbReference type="SMART" id="SM00133">
    <property type="entry name" value="S_TK_X"/>
    <property type="match status" value="1"/>
</dbReference>
<dbReference type="SMART" id="SM00220">
    <property type="entry name" value="S_TKc"/>
    <property type="match status" value="1"/>
</dbReference>
<dbReference type="SUPFAM" id="SSF56112">
    <property type="entry name" value="Protein kinase-like (PK-like)"/>
    <property type="match status" value="1"/>
</dbReference>
<dbReference type="PROSITE" id="PS51285">
    <property type="entry name" value="AGC_KINASE_CTER"/>
    <property type="match status" value="1"/>
</dbReference>
<dbReference type="PROSITE" id="PS00107">
    <property type="entry name" value="PROTEIN_KINASE_ATP"/>
    <property type="match status" value="1"/>
</dbReference>
<dbReference type="PROSITE" id="PS50011">
    <property type="entry name" value="PROTEIN_KINASE_DOM"/>
    <property type="match status" value="1"/>
</dbReference>
<dbReference type="PROSITE" id="PS00108">
    <property type="entry name" value="PROTEIN_KINASE_ST"/>
    <property type="match status" value="1"/>
</dbReference>
<comment type="function">
    <text evidence="5">Does not have an essential role in development.</text>
</comment>
<comment type="catalytic activity">
    <reaction>
        <text>L-seryl-[protein] + ATP = O-phospho-L-seryl-[protein] + ADP + H(+)</text>
        <dbReference type="Rhea" id="RHEA:17989"/>
        <dbReference type="Rhea" id="RHEA-COMP:9863"/>
        <dbReference type="Rhea" id="RHEA-COMP:11604"/>
        <dbReference type="ChEBI" id="CHEBI:15378"/>
        <dbReference type="ChEBI" id="CHEBI:29999"/>
        <dbReference type="ChEBI" id="CHEBI:30616"/>
        <dbReference type="ChEBI" id="CHEBI:83421"/>
        <dbReference type="ChEBI" id="CHEBI:456216"/>
        <dbReference type="EC" id="2.7.11.1"/>
    </reaction>
</comment>
<comment type="catalytic activity">
    <reaction>
        <text>L-threonyl-[protein] + ATP = O-phospho-L-threonyl-[protein] + ADP + H(+)</text>
        <dbReference type="Rhea" id="RHEA:46608"/>
        <dbReference type="Rhea" id="RHEA-COMP:11060"/>
        <dbReference type="Rhea" id="RHEA-COMP:11605"/>
        <dbReference type="ChEBI" id="CHEBI:15378"/>
        <dbReference type="ChEBI" id="CHEBI:30013"/>
        <dbReference type="ChEBI" id="CHEBI:30616"/>
        <dbReference type="ChEBI" id="CHEBI:61977"/>
        <dbReference type="ChEBI" id="CHEBI:456216"/>
        <dbReference type="EC" id="2.7.11.1"/>
    </reaction>
</comment>
<comment type="alternative products">
    <event type="alternative splicing"/>
    <isoform>
        <id>P16912-1</id>
        <name>B</name>
        <sequence type="displayed"/>
    </isoform>
    <isoform>
        <id>P16912-2</id>
        <name>A</name>
        <sequence type="described" ref="VSP_015105"/>
    </isoform>
</comment>
<comment type="tissue specificity">
    <text evidence="5">Expressed in embryonic mesoderm, and the optic lamina, wing disk and leg disks of third instar larvae. More abundant in adult head than adult body.</text>
</comment>
<comment type="developmental stage">
    <text>Expressed throughout development.</text>
</comment>
<comment type="similarity">
    <text evidence="7">Belongs to the protein kinase superfamily. AGC Ser/Thr protein kinase family. cAMP subfamily.</text>
</comment>